<accession>P60087</accession>
<accession>Q9R2U3</accession>
<feature type="chain" id="PRO_0000173720" description="Arginase">
    <location>
        <begin position="1"/>
        <end position="302"/>
    </location>
</feature>
<feature type="binding site" evidence="3">
    <location>
        <position position="103"/>
    </location>
    <ligand>
        <name>Mn(2+)</name>
        <dbReference type="ChEBI" id="CHEBI:29035"/>
        <label>1</label>
    </ligand>
</feature>
<feature type="binding site" evidence="3">
    <location>
        <position position="126"/>
    </location>
    <ligand>
        <name>Mn(2+)</name>
        <dbReference type="ChEBI" id="CHEBI:29035"/>
        <label>1</label>
    </ligand>
</feature>
<feature type="binding site" evidence="3">
    <location>
        <position position="126"/>
    </location>
    <ligand>
        <name>Mn(2+)</name>
        <dbReference type="ChEBI" id="CHEBI:29035"/>
        <label>2</label>
    </ligand>
</feature>
<feature type="binding site" evidence="2">
    <location>
        <begin position="128"/>
        <end position="132"/>
    </location>
    <ligand>
        <name>substrate</name>
    </ligand>
</feature>
<feature type="binding site" evidence="3">
    <location>
        <position position="128"/>
    </location>
    <ligand>
        <name>Mn(2+)</name>
        <dbReference type="ChEBI" id="CHEBI:29035"/>
        <label>2</label>
    </ligand>
</feature>
<feature type="binding site" evidence="3">
    <location>
        <position position="130"/>
    </location>
    <ligand>
        <name>Mn(2+)</name>
        <dbReference type="ChEBI" id="CHEBI:29035"/>
        <label>1</label>
    </ligand>
</feature>
<feature type="binding site" evidence="2">
    <location>
        <begin position="139"/>
        <end position="141"/>
    </location>
    <ligand>
        <name>substrate</name>
    </ligand>
</feature>
<feature type="binding site" evidence="2">
    <location>
        <position position="180"/>
    </location>
    <ligand>
        <name>substrate</name>
    </ligand>
</feature>
<feature type="binding site" evidence="3">
    <location>
        <position position="229"/>
    </location>
    <ligand>
        <name>Mn(2+)</name>
        <dbReference type="ChEBI" id="CHEBI:29035"/>
        <label>1</label>
    </ligand>
</feature>
<feature type="binding site" evidence="3">
    <location>
        <position position="229"/>
    </location>
    <ligand>
        <name>Mn(2+)</name>
        <dbReference type="ChEBI" id="CHEBI:29035"/>
        <label>2</label>
    </ligand>
</feature>
<feature type="binding site" evidence="3">
    <location>
        <position position="231"/>
    </location>
    <ligand>
        <name>Mn(2+)</name>
        <dbReference type="ChEBI" id="CHEBI:29035"/>
        <label>2</label>
    </ligand>
</feature>
<feature type="binding site" evidence="2">
    <location>
        <position position="243"/>
    </location>
    <ligand>
        <name>substrate</name>
    </ligand>
</feature>
<feature type="binding site" evidence="2">
    <location>
        <position position="274"/>
    </location>
    <ligand>
        <name>substrate</name>
    </ligand>
</feature>
<reference key="1">
    <citation type="journal article" date="2001" name="Lancet">
        <title>Whole genome sequencing of meticillin-resistant Staphylococcus aureus.</title>
        <authorList>
            <person name="Kuroda M."/>
            <person name="Ohta T."/>
            <person name="Uchiyama I."/>
            <person name="Baba T."/>
            <person name="Yuzawa H."/>
            <person name="Kobayashi I."/>
            <person name="Cui L."/>
            <person name="Oguchi A."/>
            <person name="Aoki K."/>
            <person name="Nagai Y."/>
            <person name="Lian J.-Q."/>
            <person name="Ito T."/>
            <person name="Kanamori M."/>
            <person name="Matsumaru H."/>
            <person name="Maruyama A."/>
            <person name="Murakami H."/>
            <person name="Hosoyama A."/>
            <person name="Mizutani-Ui Y."/>
            <person name="Takahashi N.K."/>
            <person name="Sawano T."/>
            <person name="Inoue R."/>
            <person name="Kaito C."/>
            <person name="Sekimizu K."/>
            <person name="Hirakawa H."/>
            <person name="Kuhara S."/>
            <person name="Goto S."/>
            <person name="Yabuzaki J."/>
            <person name="Kanehisa M."/>
            <person name="Yamashita A."/>
            <person name="Oshima K."/>
            <person name="Furuya K."/>
            <person name="Yoshino C."/>
            <person name="Shiba T."/>
            <person name="Hattori M."/>
            <person name="Ogasawara N."/>
            <person name="Hayashi H."/>
            <person name="Hiramatsu K."/>
        </authorList>
    </citation>
    <scope>NUCLEOTIDE SEQUENCE [LARGE SCALE GENOMIC DNA]</scope>
    <source>
        <strain>Mu50 / ATCC 700699</strain>
    </source>
</reference>
<dbReference type="EC" id="3.5.3.1" evidence="1"/>
<dbReference type="EMBL" id="BA000017">
    <property type="protein sequence ID" value="BAB58326.1"/>
    <property type="molecule type" value="Genomic_DNA"/>
</dbReference>
<dbReference type="SMR" id="P60087"/>
<dbReference type="KEGG" id="sav:SAV2164"/>
<dbReference type="HOGENOM" id="CLU_039478_6_2_9"/>
<dbReference type="PhylomeDB" id="P60087"/>
<dbReference type="UniPathway" id="UPA00158">
    <property type="reaction ID" value="UER00270"/>
</dbReference>
<dbReference type="Proteomes" id="UP000002481">
    <property type="component" value="Chromosome"/>
</dbReference>
<dbReference type="GO" id="GO:0005737">
    <property type="term" value="C:cytoplasm"/>
    <property type="evidence" value="ECO:0007669"/>
    <property type="project" value="TreeGrafter"/>
</dbReference>
<dbReference type="GO" id="GO:0004053">
    <property type="term" value="F:arginase activity"/>
    <property type="evidence" value="ECO:0007669"/>
    <property type="project" value="UniProtKB-EC"/>
</dbReference>
<dbReference type="GO" id="GO:0030145">
    <property type="term" value="F:manganese ion binding"/>
    <property type="evidence" value="ECO:0007669"/>
    <property type="project" value="TreeGrafter"/>
</dbReference>
<dbReference type="GO" id="GO:0019547">
    <property type="term" value="P:arginine catabolic process to ornithine"/>
    <property type="evidence" value="ECO:0007669"/>
    <property type="project" value="TreeGrafter"/>
</dbReference>
<dbReference type="GO" id="GO:0000050">
    <property type="term" value="P:urea cycle"/>
    <property type="evidence" value="ECO:0007669"/>
    <property type="project" value="UniProtKB-UniPathway"/>
</dbReference>
<dbReference type="CDD" id="cd09989">
    <property type="entry name" value="Arginase"/>
    <property type="match status" value="1"/>
</dbReference>
<dbReference type="FunFam" id="3.40.800.10:FF:000005">
    <property type="entry name" value="Arginase"/>
    <property type="match status" value="1"/>
</dbReference>
<dbReference type="Gene3D" id="3.40.800.10">
    <property type="entry name" value="Ureohydrolase domain"/>
    <property type="match status" value="1"/>
</dbReference>
<dbReference type="InterPro" id="IPR014033">
    <property type="entry name" value="Arginase"/>
</dbReference>
<dbReference type="InterPro" id="IPR006035">
    <property type="entry name" value="Ureohydrolase"/>
</dbReference>
<dbReference type="InterPro" id="IPR023696">
    <property type="entry name" value="Ureohydrolase_dom_sf"/>
</dbReference>
<dbReference type="InterPro" id="IPR020855">
    <property type="entry name" value="Ureohydrolase_Mn_BS"/>
</dbReference>
<dbReference type="NCBIfam" id="TIGR01229">
    <property type="entry name" value="rocF_arginase"/>
    <property type="match status" value="1"/>
</dbReference>
<dbReference type="PANTHER" id="PTHR43782">
    <property type="entry name" value="ARGINASE"/>
    <property type="match status" value="1"/>
</dbReference>
<dbReference type="PANTHER" id="PTHR43782:SF3">
    <property type="entry name" value="ARGINASE"/>
    <property type="match status" value="1"/>
</dbReference>
<dbReference type="Pfam" id="PF00491">
    <property type="entry name" value="Arginase"/>
    <property type="match status" value="1"/>
</dbReference>
<dbReference type="PIRSF" id="PIRSF036979">
    <property type="entry name" value="Arginase"/>
    <property type="match status" value="1"/>
</dbReference>
<dbReference type="PRINTS" id="PR00116">
    <property type="entry name" value="ARGINASE"/>
</dbReference>
<dbReference type="SUPFAM" id="SSF52768">
    <property type="entry name" value="Arginase/deacetylase"/>
    <property type="match status" value="1"/>
</dbReference>
<dbReference type="PROSITE" id="PS01053">
    <property type="entry name" value="ARGINASE_1"/>
    <property type="match status" value="1"/>
</dbReference>
<dbReference type="PROSITE" id="PS51409">
    <property type="entry name" value="ARGINASE_2"/>
    <property type="match status" value="1"/>
</dbReference>
<comment type="catalytic activity">
    <reaction evidence="1">
        <text>L-arginine + H2O = urea + L-ornithine</text>
        <dbReference type="Rhea" id="RHEA:20569"/>
        <dbReference type="ChEBI" id="CHEBI:15377"/>
        <dbReference type="ChEBI" id="CHEBI:16199"/>
        <dbReference type="ChEBI" id="CHEBI:32682"/>
        <dbReference type="ChEBI" id="CHEBI:46911"/>
        <dbReference type="EC" id="3.5.3.1"/>
    </reaction>
</comment>
<comment type="cofactor">
    <cofactor evidence="3">
        <name>Mn(2+)</name>
        <dbReference type="ChEBI" id="CHEBI:29035"/>
    </cofactor>
    <text evidence="3">Binds 2 manganese ions per subunit.</text>
</comment>
<comment type="pathway">
    <text evidence="1">Nitrogen metabolism; urea cycle; L-ornithine and urea from L-arginine: step 1/1.</text>
</comment>
<comment type="similarity">
    <text evidence="3">Belongs to the arginase family.</text>
</comment>
<proteinExistence type="inferred from homology"/>
<gene>
    <name type="primary">arg</name>
    <name type="ordered locus">SAV2164</name>
</gene>
<sequence length="302" mass="33265">MTKTKAIDIIGAPSTFGQRKLGVDLGPTAIRYAGLISRLKQLDLDVYDKGDIKVPAVNIEKFHSEQKGLRNYDEIIDVNQKLNKEVSASIENNRFPLVLGGDHSIAVGSVSAISKHYNNLGVIWYDAHGDLNIPEESPSGNIHGMPLRILTGEGPKELLELNSNVIKPENIVLIGMRDLDKGERQFIKDHNIKTFTMSDIDKLGIKEVIENTIEYLKSRNVDGVHLSLDVDALDPLETPGTGTRVLGGLSYRESHFALELLHQSHLISSMDLVEVNPLIDSNNHTAEQAVSLVGTFFGETLL</sequence>
<keyword id="KW-0056">Arginine metabolism</keyword>
<keyword id="KW-0378">Hydrolase</keyword>
<keyword id="KW-0464">Manganese</keyword>
<keyword id="KW-0479">Metal-binding</keyword>
<name>ARGI_STAAM</name>
<evidence type="ECO:0000250" key="1">
    <source>
        <dbReference type="UniProtKB" id="P05089"/>
    </source>
</evidence>
<evidence type="ECO:0000250" key="2">
    <source>
        <dbReference type="UniProtKB" id="P53608"/>
    </source>
</evidence>
<evidence type="ECO:0000255" key="3">
    <source>
        <dbReference type="PROSITE-ProRule" id="PRU00742"/>
    </source>
</evidence>
<organism>
    <name type="scientific">Staphylococcus aureus (strain Mu50 / ATCC 700699)</name>
    <dbReference type="NCBI Taxonomy" id="158878"/>
    <lineage>
        <taxon>Bacteria</taxon>
        <taxon>Bacillati</taxon>
        <taxon>Bacillota</taxon>
        <taxon>Bacilli</taxon>
        <taxon>Bacillales</taxon>
        <taxon>Staphylococcaceae</taxon>
        <taxon>Staphylococcus</taxon>
    </lineage>
</organism>
<protein>
    <recommendedName>
        <fullName>Arginase</fullName>
        <ecNumber evidence="1">3.5.3.1</ecNumber>
    </recommendedName>
</protein>